<proteinExistence type="inferred from homology"/>
<keyword id="KW-0167">Capsid protein</keyword>
<keyword id="KW-1032">Host cell membrane</keyword>
<keyword id="KW-1035">Host cytoplasm</keyword>
<keyword id="KW-1039">Host endosome</keyword>
<keyword id="KW-1043">Host membrane</keyword>
<keyword id="KW-0945">Host-virus interaction</keyword>
<keyword id="KW-0449">Lipoprotein</keyword>
<keyword id="KW-0472">Membrane</keyword>
<keyword id="KW-0479">Metal-binding</keyword>
<keyword id="KW-0519">Myristate</keyword>
<keyword id="KW-0597">Phosphoprotein</keyword>
<keyword id="KW-0694">RNA-binding</keyword>
<keyword id="KW-1198">Viral budding</keyword>
<keyword id="KW-1187">Viral budding via the host ESCRT complexes</keyword>
<keyword id="KW-0468">Viral matrix protein</keyword>
<keyword id="KW-0543">Viral nucleoprotein</keyword>
<keyword id="KW-1188">Viral release from host cell</keyword>
<keyword id="KW-0946">Virion</keyword>
<keyword id="KW-0862">Zinc</keyword>
<keyword id="KW-0863">Zinc-finger</keyword>
<sequence>MGQDNSTPISLTLNHWRDVRTRAHNLSVEIKKGKWQTFCSSEWPTFGVGWPPEGTFNLSVIFAVKKIVFQENGGHPDQVPYIVVWQDLAQNPPPWVPASAKVAVVSDTRRPVAGRPSAPPRPPIYPATDDLLLLSEPTPPPYPAALPPPLAPQAIGPPSGQMPDSSDPEGPAAGTRSRRARSPADNSGPDSTVILPLRAIGPPAEPNGLVPLQYWPFSSADLYNWKSNHPSFSENPAGLTGLLESLMFSHQPTWDDCQQLLQILFTTEERERILLEARKNVLGDNGAPTQLENLINEAFPLNRPHWDYNTAAGRERLLVYRRTLVAGLKGAARRPTNLAKVREVLQGPAEPPSVFLERLMEAYRRYTPFDPSSEGQQAAVAMAFIGQSAPDIKKKLQRLEGLQDYSLQDLVKEAEKVYHKRETEEERQEREKKEAEEKERRRDRPKKKNLTKILAAVVSREGSTGRQTGNLSNQAKKTPRDGRPPLDKDQCAYCKEKGHWARECPRKKHVREAKVLALDN</sequence>
<organism>
    <name type="scientific">Gibbon ape leukemia virus</name>
    <name type="common">GALV</name>
    <dbReference type="NCBI Taxonomy" id="11840"/>
    <lineage>
        <taxon>Viruses</taxon>
        <taxon>Riboviria</taxon>
        <taxon>Pararnavirae</taxon>
        <taxon>Artverviricota</taxon>
        <taxon>Revtraviricetes</taxon>
        <taxon>Ortervirales</taxon>
        <taxon>Retroviridae</taxon>
        <taxon>Orthoretrovirinae</taxon>
        <taxon>Gammaretrovirus</taxon>
    </lineage>
</organism>
<reference key="1">
    <citation type="journal article" date="1989" name="Virology">
        <title>Genetic organization of gibbon ape leukemia virus.</title>
        <authorList>
            <person name="Delassus S."/>
            <person name="Sonigo P."/>
            <person name="Wain-Hobson S."/>
        </authorList>
    </citation>
    <scope>NUCLEOTIDE SEQUENCE [GENOMIC RNA]</scope>
</reference>
<gene>
    <name type="primary">gag</name>
</gene>
<evidence type="ECO:0000250" key="1">
    <source>
        <dbReference type="UniProtKB" id="P03332"/>
    </source>
</evidence>
<evidence type="ECO:0000250" key="2">
    <source>
        <dbReference type="UniProtKB" id="P03336"/>
    </source>
</evidence>
<evidence type="ECO:0000250" key="3">
    <source>
        <dbReference type="UniProtKB" id="P26807"/>
    </source>
</evidence>
<evidence type="ECO:0000255" key="4"/>
<evidence type="ECO:0000255" key="5">
    <source>
        <dbReference type="PROSITE-ProRule" id="PRU00047"/>
    </source>
</evidence>
<evidence type="ECO:0000256" key="6">
    <source>
        <dbReference type="SAM" id="MobiDB-lite"/>
    </source>
</evidence>
<evidence type="ECO:0000305" key="7"/>
<dbReference type="EMBL" id="M26927">
    <property type="protein sequence ID" value="AAA46809.1"/>
    <property type="molecule type" value="Genomic_RNA"/>
</dbReference>
<dbReference type="PIR" id="A32595">
    <property type="entry name" value="FOLJGL"/>
</dbReference>
<dbReference type="RefSeq" id="NP_056789.1">
    <property type="nucleotide sequence ID" value="NC_001885.3"/>
</dbReference>
<dbReference type="SMR" id="P21416"/>
<dbReference type="GeneID" id="1491894"/>
<dbReference type="KEGG" id="vg:1491894"/>
<dbReference type="OrthoDB" id="3221at10239"/>
<dbReference type="Proteomes" id="UP000008231">
    <property type="component" value="Genome"/>
</dbReference>
<dbReference type="GO" id="GO:0044185">
    <property type="term" value="C:host cell late endosome membrane"/>
    <property type="evidence" value="ECO:0007669"/>
    <property type="project" value="UniProtKB-SubCell"/>
</dbReference>
<dbReference type="GO" id="GO:0020002">
    <property type="term" value="C:host cell plasma membrane"/>
    <property type="evidence" value="ECO:0007669"/>
    <property type="project" value="UniProtKB-SubCell"/>
</dbReference>
<dbReference type="GO" id="GO:0072494">
    <property type="term" value="C:host multivesicular body"/>
    <property type="evidence" value="ECO:0007669"/>
    <property type="project" value="UniProtKB-SubCell"/>
</dbReference>
<dbReference type="GO" id="GO:0016020">
    <property type="term" value="C:membrane"/>
    <property type="evidence" value="ECO:0007669"/>
    <property type="project" value="UniProtKB-KW"/>
</dbReference>
<dbReference type="GO" id="GO:0019013">
    <property type="term" value="C:viral nucleocapsid"/>
    <property type="evidence" value="ECO:0007669"/>
    <property type="project" value="UniProtKB-KW"/>
</dbReference>
<dbReference type="GO" id="GO:0003723">
    <property type="term" value="F:RNA binding"/>
    <property type="evidence" value="ECO:0007669"/>
    <property type="project" value="UniProtKB-KW"/>
</dbReference>
<dbReference type="GO" id="GO:0039660">
    <property type="term" value="F:structural constituent of virion"/>
    <property type="evidence" value="ECO:0007669"/>
    <property type="project" value="UniProtKB-KW"/>
</dbReference>
<dbReference type="GO" id="GO:0008270">
    <property type="term" value="F:zinc ion binding"/>
    <property type="evidence" value="ECO:0007669"/>
    <property type="project" value="UniProtKB-KW"/>
</dbReference>
<dbReference type="GO" id="GO:0039702">
    <property type="term" value="P:viral budding via host ESCRT complex"/>
    <property type="evidence" value="ECO:0007669"/>
    <property type="project" value="UniProtKB-KW"/>
</dbReference>
<dbReference type="Gene3D" id="1.10.150.180">
    <property type="entry name" value="Gamma-retroviral matrix domain"/>
    <property type="match status" value="1"/>
</dbReference>
<dbReference type="Gene3D" id="1.10.375.10">
    <property type="entry name" value="Human Immunodeficiency Virus Type 1 Capsid Protein"/>
    <property type="match status" value="1"/>
</dbReference>
<dbReference type="Gene3D" id="4.10.60.10">
    <property type="entry name" value="Zinc finger, CCHC-type"/>
    <property type="match status" value="1"/>
</dbReference>
<dbReference type="InterPro" id="IPR000840">
    <property type="entry name" value="G_retro_matrix"/>
</dbReference>
<dbReference type="InterPro" id="IPR036946">
    <property type="entry name" value="G_retro_matrix_sf"/>
</dbReference>
<dbReference type="InterPro" id="IPR003036">
    <property type="entry name" value="Gag_P30"/>
</dbReference>
<dbReference type="InterPro" id="IPR008919">
    <property type="entry name" value="Retrov_capsid_N"/>
</dbReference>
<dbReference type="InterPro" id="IPR050462">
    <property type="entry name" value="Retroviral_Gag-Pol_poly"/>
</dbReference>
<dbReference type="InterPro" id="IPR010999">
    <property type="entry name" value="Retrovr_matrix"/>
</dbReference>
<dbReference type="InterPro" id="IPR001878">
    <property type="entry name" value="Znf_CCHC"/>
</dbReference>
<dbReference type="InterPro" id="IPR036875">
    <property type="entry name" value="Znf_CCHC_sf"/>
</dbReference>
<dbReference type="PANTHER" id="PTHR33166">
    <property type="entry name" value="GAG_P30 DOMAIN-CONTAINING PROTEIN"/>
    <property type="match status" value="1"/>
</dbReference>
<dbReference type="Pfam" id="PF01140">
    <property type="entry name" value="Gag_MA"/>
    <property type="match status" value="1"/>
</dbReference>
<dbReference type="Pfam" id="PF02093">
    <property type="entry name" value="Gag_p30"/>
    <property type="match status" value="1"/>
</dbReference>
<dbReference type="Pfam" id="PF00098">
    <property type="entry name" value="zf-CCHC"/>
    <property type="match status" value="1"/>
</dbReference>
<dbReference type="SMART" id="SM00343">
    <property type="entry name" value="ZnF_C2HC"/>
    <property type="match status" value="1"/>
</dbReference>
<dbReference type="SUPFAM" id="SSF47836">
    <property type="entry name" value="Retroviral matrix proteins"/>
    <property type="match status" value="1"/>
</dbReference>
<dbReference type="SUPFAM" id="SSF47943">
    <property type="entry name" value="Retrovirus capsid protein, N-terminal core domain"/>
    <property type="match status" value="1"/>
</dbReference>
<dbReference type="SUPFAM" id="SSF57756">
    <property type="entry name" value="Retrovirus zinc finger-like domains"/>
    <property type="match status" value="1"/>
</dbReference>
<dbReference type="PROSITE" id="PS50158">
    <property type="entry name" value="ZF_CCHC"/>
    <property type="match status" value="1"/>
</dbReference>
<comment type="function">
    <molecule>Gag polyprotein</molecule>
    <text evidence="1">Plays a role in budding and is processed by the viral protease during virion maturation outside the cell. During budding, it recruits, in a PPXY-dependent or independent manner, Nedd4-like ubiquitin ligases that conjugate ubiquitin molecules to Gag, or to Gag binding host factors. Interaction with HECT ubiquitin ligases probably links the viral protein to the host ESCRT pathway and facilitates release.</text>
</comment>
<comment type="function">
    <molecule>Matrix protein p15</molecule>
    <text evidence="1">Targets Gag and gag-pol polyproteins to the plasma membrane via a multipartite membrane binding signal, that includes its myristoylated N-terminus. Also mediates nuclear localization of the pre-integration complex.</text>
</comment>
<comment type="function">
    <molecule>RNA-binding phosphoprotein p12</molecule>
    <text evidence="1">Constituent of the pre-integration complex (PIC) which tethers the latter to mitotic chromosomes.</text>
</comment>
<comment type="function">
    <molecule>Capsid protein p30</molecule>
    <text evidence="2">Forms the spherical core of the virion that encapsulates the genomic RNA-nucleocapsid complex.</text>
</comment>
<comment type="function">
    <molecule>Nucleocapsid protein p10-Gag</molecule>
    <text evidence="1">Involved in the packaging and encapsidation of two copies of the genome. Binds with high affinity to conserved elements within the packaging signal, located near the 5'-end of the genome. This binding is dependent on genome dimerization.</text>
</comment>
<comment type="subunit">
    <molecule>Capsid protein p30</molecule>
    <text evidence="1 2">Homohexamer; further associates as homomultimer (By similarity). The virus core is composed of a lattice formed from hexagonal rings, each containing six capsid monomers.</text>
</comment>
<comment type="subunit">
    <molecule>Gag polyprotein</molecule>
    <text evidence="1">Interacts (via PPXY motif) with host NEDD4. Interacts (via PSAP motif) with host TSG101.</text>
</comment>
<comment type="subcellular location">
    <molecule>Gag polyprotein</molecule>
    <subcellularLocation>
        <location evidence="1">Virion</location>
    </subcellularLocation>
    <subcellularLocation>
        <location evidence="1">Host cell membrane</location>
        <topology evidence="1">Lipid-anchor</topology>
    </subcellularLocation>
    <subcellularLocation>
        <location evidence="1">Host late endosome membrane</location>
        <topology evidence="1">Lipid-anchor</topology>
    </subcellularLocation>
    <subcellularLocation>
        <location evidence="3">Host endosome</location>
        <location evidence="3">Host multivesicular body</location>
    </subcellularLocation>
    <text evidence="7">These locations are probably linked to virus assembly sites.</text>
</comment>
<comment type="subcellular location">
    <molecule>Matrix protein p15</molecule>
    <subcellularLocation>
        <location evidence="1">Virion</location>
    </subcellularLocation>
</comment>
<comment type="subcellular location">
    <molecule>Capsid protein p30</molecule>
    <subcellularLocation>
        <location evidence="1">Virion</location>
    </subcellularLocation>
</comment>
<comment type="subcellular location">
    <molecule>Nucleocapsid protein p10-Gag</molecule>
    <subcellularLocation>
        <location evidence="1">Virion</location>
    </subcellularLocation>
</comment>
<comment type="subcellular location">
    <molecule>RNA-binding phosphoprotein p12</molecule>
    <subcellularLocation>
        <location evidence="1">Host cytoplasm</location>
    </subcellularLocation>
    <text evidence="1">Localizes to the host cytoplasm early in infection and binds to the mitotic chromosomes later on.</text>
</comment>
<comment type="domain">
    <molecule>Gag polyprotein</molecule>
    <text evidence="1">Late-budding domains (L domains) are short sequence motifs essential for viral particle budding. They recruit proteins of the host ESCRT machinery (Endosomal Sorting Complex Required for Transport) or ESCRT-associated proteins. RNA-binding phosphoprotein p12 contains one L domain: a PPXY motif which potentially interacts with the WW domain 3 of NEDD4 E3 ubiquitin ligase. Matrix protein p15 contains one L domain: a PTAP/PSAP motif, which potentially interacts with the UEV domain of TSG101.</text>
</comment>
<comment type="PTM">
    <molecule>Gag polyprotein</molecule>
    <text evidence="1">Specific enzymatic cleavages by the viral protease yield mature proteins. The protease is released by autocatalytic cleavage. The polyprotein is cleaved during and after budding, this process is termed maturation.</text>
</comment>
<comment type="PTM">
    <text evidence="1">RNA-binding phosphoprotein p12 is phosphorylated on serine residues.</text>
</comment>
<organismHost>
    <name type="scientific">Hylobatidae</name>
    <name type="common">gibbons</name>
    <dbReference type="NCBI Taxonomy" id="9577"/>
</organismHost>
<accession>P21416</accession>
<feature type="initiator methionine" description="Removed; by host" evidence="4">
    <location>
        <position position="1"/>
    </location>
</feature>
<feature type="chain" id="PRO_0000390804" description="Gag polyprotein">
    <location>
        <begin position="2"/>
        <end position="520"/>
    </location>
</feature>
<feature type="chain" id="PRO_0000040863" description="Matrix protein p15">
    <location>
        <begin position="2"/>
        <end position="125"/>
    </location>
</feature>
<feature type="chain" id="PRO_0000040864" description="RNA-binding phosphoprotein p12">
    <location>
        <begin position="126"/>
        <end position="195"/>
    </location>
</feature>
<feature type="chain" id="PRO_0000040865" description="Capsid protein p30">
    <location>
        <begin position="196"/>
        <end position="454"/>
    </location>
</feature>
<feature type="chain" id="PRO_0000040866" description="Nucleocapsid protein p10-Gag">
    <location>
        <begin position="455"/>
        <end position="520"/>
    </location>
</feature>
<feature type="zinc finger region" description="CCHC-type" evidence="5">
    <location>
        <begin position="489"/>
        <end position="506"/>
    </location>
</feature>
<feature type="region of interest" description="Disordered" evidence="6">
    <location>
        <begin position="110"/>
        <end position="199"/>
    </location>
</feature>
<feature type="region of interest" description="Disordered" evidence="6">
    <location>
        <begin position="419"/>
        <end position="489"/>
    </location>
</feature>
<feature type="short sequence motif" description="PTAP/PSAP motif" evidence="1">
    <location>
        <begin position="116"/>
        <end position="119"/>
    </location>
</feature>
<feature type="short sequence motif" description="PPXY motif" evidence="1">
    <location>
        <begin position="139"/>
        <end position="142"/>
    </location>
</feature>
<feature type="compositionally biased region" description="Pro residues" evidence="6">
    <location>
        <begin position="137"/>
        <end position="151"/>
    </location>
</feature>
<feature type="compositionally biased region" description="Basic and acidic residues" evidence="6">
    <location>
        <begin position="419"/>
        <end position="442"/>
    </location>
</feature>
<feature type="compositionally biased region" description="Polar residues" evidence="6">
    <location>
        <begin position="461"/>
        <end position="476"/>
    </location>
</feature>
<feature type="compositionally biased region" description="Basic and acidic residues" evidence="6">
    <location>
        <begin position="478"/>
        <end position="489"/>
    </location>
</feature>
<feature type="site" description="Cleavage; by viral protease" evidence="1">
    <location>
        <begin position="125"/>
        <end position="126"/>
    </location>
</feature>
<feature type="site" description="Cleavage; by viral protease" evidence="1">
    <location>
        <begin position="195"/>
        <end position="196"/>
    </location>
</feature>
<feature type="site" description="Cleavage; by viral protease" evidence="1">
    <location>
        <begin position="454"/>
        <end position="455"/>
    </location>
</feature>
<feature type="lipid moiety-binding region" description="N-myristoyl glycine; by host" evidence="4">
    <location>
        <position position="2"/>
    </location>
</feature>
<name>GAG_GALV</name>
<protein>
    <recommendedName>
        <fullName>Gag polyprotein</fullName>
    </recommendedName>
    <alternativeName>
        <fullName>Core polyprotein</fullName>
    </alternativeName>
    <component>
        <recommendedName>
            <fullName>Matrix protein p15</fullName>
            <shortName>MA</shortName>
        </recommendedName>
    </component>
    <component>
        <recommendedName>
            <fullName>RNA-binding phosphoprotein p12</fullName>
        </recommendedName>
        <alternativeName>
            <fullName>pp12</fullName>
        </alternativeName>
    </component>
    <component>
        <recommendedName>
            <fullName>Capsid protein p30</fullName>
            <shortName>CA</shortName>
        </recommendedName>
    </component>
    <component>
        <recommendedName>
            <fullName>Nucleocapsid protein p10-Gag</fullName>
            <shortName>NC-gag</shortName>
        </recommendedName>
    </component>
</protein>